<reference key="1">
    <citation type="journal article" date="1998" name="Nature">
        <title>Deciphering the biology of Mycobacterium tuberculosis from the complete genome sequence.</title>
        <authorList>
            <person name="Cole S.T."/>
            <person name="Brosch R."/>
            <person name="Parkhill J."/>
            <person name="Garnier T."/>
            <person name="Churcher C.M."/>
            <person name="Harris D.E."/>
            <person name="Gordon S.V."/>
            <person name="Eiglmeier K."/>
            <person name="Gas S."/>
            <person name="Barry C.E. III"/>
            <person name="Tekaia F."/>
            <person name="Badcock K."/>
            <person name="Basham D."/>
            <person name="Brown D."/>
            <person name="Chillingworth T."/>
            <person name="Connor R."/>
            <person name="Davies R.M."/>
            <person name="Devlin K."/>
            <person name="Feltwell T."/>
            <person name="Gentles S."/>
            <person name="Hamlin N."/>
            <person name="Holroyd S."/>
            <person name="Hornsby T."/>
            <person name="Jagels K."/>
            <person name="Krogh A."/>
            <person name="McLean J."/>
            <person name="Moule S."/>
            <person name="Murphy L.D."/>
            <person name="Oliver S."/>
            <person name="Osborne J."/>
            <person name="Quail M.A."/>
            <person name="Rajandream M.A."/>
            <person name="Rogers J."/>
            <person name="Rutter S."/>
            <person name="Seeger K."/>
            <person name="Skelton S."/>
            <person name="Squares S."/>
            <person name="Squares R."/>
            <person name="Sulston J.E."/>
            <person name="Taylor K."/>
            <person name="Whitehead S."/>
            <person name="Barrell B.G."/>
        </authorList>
    </citation>
    <scope>NUCLEOTIDE SEQUENCE [LARGE SCALE GENOMIC DNA]</scope>
    <source>
        <strain>ATCC 25618 / H37Rv</strain>
    </source>
</reference>
<reference key="2">
    <citation type="submission" date="2013-11" db="EMBL/GenBank/DDBJ databases">
        <title>The genome sequence of Mycobacterium tuberculosis H37Rv.</title>
        <authorList>
            <consortium name="The Broad Institute Genome Sequencing Platform"/>
            <person name="Galagan J."/>
            <person name="Kreiswirth B."/>
            <person name="Dobos K."/>
            <person name="Fortune S."/>
            <person name="Fitzgerald M."/>
            <person name="Young S.K."/>
            <person name="Zeng Q."/>
            <person name="Gargeya S."/>
            <person name="Abouelleil A."/>
            <person name="Alvarado L."/>
            <person name="Berlin A.M."/>
            <person name="Chapman S.B."/>
            <person name="Gainer-Dewar J."/>
            <person name="Goldberg J."/>
            <person name="Gnerre S."/>
            <person name="Griggs A."/>
            <person name="Gujja S."/>
            <person name="Hansen M."/>
            <person name="Howarth C."/>
            <person name="Imamovic A."/>
            <person name="Larimer J."/>
            <person name="McCowan C."/>
            <person name="Murphy C."/>
            <person name="Pearson M."/>
            <person name="Poon T."/>
            <person name="Priest M."/>
            <person name="Roberts A."/>
            <person name="Saif S."/>
            <person name="Shea T."/>
            <person name="Sykes S."/>
            <person name="Wortman J."/>
            <person name="Nusbaum C."/>
            <person name="Birren B."/>
        </authorList>
    </citation>
    <scope>NUCLEOTIDE SEQUENCE [LARGE SCALE GENOMIC DNA]</scope>
    <source>
        <strain>ATCC 25618 / H37Rv</strain>
    </source>
</reference>
<reference key="3">
    <citation type="submission" date="2014-04" db="EMBL/GenBank/DDBJ databases">
        <title>The genome sequence of Mycobacterium tuberculosis H37Rv.</title>
        <authorList>
            <consortium name="The Broad Institute Genomics Platform"/>
            <consortium name="The Broad Institute Genome Sequencing Center for Infectious Disease"/>
            <person name="Earl A.M."/>
            <person name="Kreiswirth B."/>
            <person name="Gomez J."/>
            <person name="Victor T."/>
            <person name="Desjardins C."/>
            <person name="Abeel T."/>
            <person name="Young S."/>
            <person name="Zeng Q."/>
            <person name="Gargeya S."/>
            <person name="Abouelleil A."/>
            <person name="Alvarado L."/>
            <person name="Chapman S.B."/>
            <person name="Gainer-Dewar J."/>
            <person name="Goldberg J."/>
            <person name="Griggs A."/>
            <person name="Gujja S."/>
            <person name="Hansen M."/>
            <person name="Howarth C."/>
            <person name="Imamovic A."/>
            <person name="Larimer J."/>
            <person name="Murphy C."/>
            <person name="Naylor J."/>
            <person name="Pearson M."/>
            <person name="Poon T.W."/>
            <person name="Priest M."/>
            <person name="Roberts A."/>
            <person name="Saif S."/>
            <person name="Shea T."/>
            <person name="Sykes S."/>
            <person name="Wortman J."/>
            <person name="Nusbaum C."/>
            <person name="Birren B."/>
        </authorList>
    </citation>
    <scope>NUCLEOTIDE SEQUENCE [LARGE SCALE GENOMIC DNA]</scope>
    <source>
        <strain>ATCC 25618 / H37Rv</strain>
    </source>
</reference>
<reference key="4">
    <citation type="journal article" date="2011" name="Mol. Cell. Proteomics">
        <title>Proteogenomic analysis of Mycobacterium tuberculosis by high resolution mass spectrometry.</title>
        <authorList>
            <person name="Kelkar D.S."/>
            <person name="Kumar D."/>
            <person name="Kumar P."/>
            <person name="Balakrishnan L."/>
            <person name="Muthusamy B."/>
            <person name="Yadav A.K."/>
            <person name="Shrivastava P."/>
            <person name="Marimuthu A."/>
            <person name="Anand S."/>
            <person name="Sundaram H."/>
            <person name="Kingsbury R."/>
            <person name="Harsha H.C."/>
            <person name="Nair B."/>
            <person name="Prasad T.S."/>
            <person name="Chauhan D.S."/>
            <person name="Katoch K."/>
            <person name="Katoch V.M."/>
            <person name="Kumar P."/>
            <person name="Chaerkady R."/>
            <person name="Ramachandran S."/>
            <person name="Dash D."/>
            <person name="Pandey A."/>
        </authorList>
    </citation>
    <scope>IDENTIFICATION BY MASS SPECTROMETRY [LARGE SCALE ANALYSIS]</scope>
    <source>
        <strain>ATCC 25618 / H37Rv</strain>
    </source>
</reference>
<reference key="5">
    <citation type="journal article" date="2011" name="Mol. Microbiol.">
        <title>A novel copper-responsive regulon in Mycobacterium tuberculosis.</title>
        <authorList>
            <person name="Festa R.A."/>
            <person name="Jones M.B."/>
            <person name="Butler-Wu S."/>
            <person name="Sinsimer D."/>
            <person name="Gerads R."/>
            <person name="Bishai W.R."/>
            <person name="Peterson S.N."/>
            <person name="Darwin K.H."/>
        </authorList>
    </citation>
    <scope>INDUCTION</scope>
    <source>
        <strain>ATCC 25618 / H37Rv</strain>
    </source>
</reference>
<reference key="6">
    <citation type="journal article" date="2014" name="MBio">
        <title>The copper-responsive RicR regulon contributes to Mycobacterium tuberculosis virulence.</title>
        <authorList>
            <person name="Shi X."/>
            <person name="Festa R.A."/>
            <person name="Ioerger T.R."/>
            <person name="Butler-Wu S."/>
            <person name="Sacchettini J.C."/>
            <person name="Darwin K.H."/>
            <person name="Samanovic M.I."/>
        </authorList>
    </citation>
    <scope>DISRUPTION PHENOTYPE</scope>
    <source>
        <strain>ATCC 25618 / H37Rv</strain>
    </source>
</reference>
<protein>
    <recommendedName>
        <fullName evidence="4">Putative permease Rv2963</fullName>
    </recommendedName>
</protein>
<evidence type="ECO:0000255" key="1"/>
<evidence type="ECO:0000269" key="2">
    <source>
    </source>
</evidence>
<evidence type="ECO:0000269" key="3">
    <source>
    </source>
</evidence>
<evidence type="ECO:0000305" key="4"/>
<evidence type="ECO:0000312" key="5">
    <source>
        <dbReference type="EMBL" id="AFN50945.1"/>
    </source>
</evidence>
<evidence type="ECO:0000312" key="6">
    <source>
        <dbReference type="EMBL" id="CCP45767.1"/>
    </source>
</evidence>
<evidence type="ECO:0000312" key="7">
    <source>
        <dbReference type="EMBL" id="KBJ29879.1"/>
    </source>
</evidence>
<gene>
    <name evidence="6" type="ordered locus">Rv2963</name>
    <name evidence="5" type="ordered locus">RVBD_2963</name>
    <name evidence="7" type="ORF">P425_03084</name>
</gene>
<feature type="chain" id="PRO_0000433101" description="Putative permease Rv2963">
    <location>
        <begin position="1"/>
        <end position="406"/>
    </location>
</feature>
<feature type="transmembrane region" description="Helical" evidence="1">
    <location>
        <begin position="30"/>
        <end position="50"/>
    </location>
</feature>
<feature type="transmembrane region" description="Helical" evidence="1">
    <location>
        <begin position="67"/>
        <end position="87"/>
    </location>
</feature>
<feature type="transmembrane region" description="Helical" evidence="1">
    <location>
        <begin position="111"/>
        <end position="131"/>
    </location>
</feature>
<feature type="transmembrane region" description="Helical" evidence="1">
    <location>
        <begin position="132"/>
        <end position="152"/>
    </location>
</feature>
<feature type="transmembrane region" description="Helical" evidence="1">
    <location>
        <begin position="208"/>
        <end position="228"/>
    </location>
</feature>
<feature type="transmembrane region" description="Helical" evidence="1">
    <location>
        <begin position="246"/>
        <end position="266"/>
    </location>
</feature>
<feature type="transmembrane region" description="Helical" evidence="1">
    <location>
        <begin position="278"/>
        <end position="298"/>
    </location>
</feature>
<feature type="transmembrane region" description="Helical" evidence="1">
    <location>
        <begin position="312"/>
        <end position="332"/>
    </location>
</feature>
<feature type="transmembrane region" description="Helical" evidence="1">
    <location>
        <begin position="361"/>
        <end position="381"/>
    </location>
</feature>
<keyword id="KW-1003">Cell membrane</keyword>
<keyword id="KW-0472">Membrane</keyword>
<keyword id="KW-1185">Reference proteome</keyword>
<keyword id="KW-0812">Transmembrane</keyword>
<keyword id="KW-1133">Transmembrane helix</keyword>
<sequence>MTSTKVEDRVTAAVLGAIGHALALTASMTWEILWALILGFALSAVVQAVVRRSTIVTLLGDDRPRTLVIATGLGAASSSCSYAAVALARSLFRKGANFTAAMAFEIGSTNLVVELGIILALLMGWQFTAAEFVGGPIMILVLAVLFRLFVGARLIDAAREQAERGLAGSMEGHAAMDMSIKREGSFWRRLLSPPGFTSIAHVFVMEWLAILRDLILGLLIAGAIAAWVPESFWQSFFLANHPAWSAVWGPIIGPIVAIVSFVCSIGNVPLAAVLWNGGISFGGVIAFIFADLLILPILNIYRKYYGARMMLVLLGTFYASMVVAGYLIELLFGTTNLIPSQRSATVMTAEISWNYTTWLNVIFLVIAAALVVRFITSGGLPMLRMMGGSPDAPHDHHDRHDDHLGH</sequence>
<name>Y2963_MYCTU</name>
<proteinExistence type="evidence at protein level"/>
<organism>
    <name type="scientific">Mycobacterium tuberculosis (strain ATCC 25618 / H37Rv)</name>
    <dbReference type="NCBI Taxonomy" id="83332"/>
    <lineage>
        <taxon>Bacteria</taxon>
        <taxon>Bacillati</taxon>
        <taxon>Actinomycetota</taxon>
        <taxon>Actinomycetes</taxon>
        <taxon>Mycobacteriales</taxon>
        <taxon>Mycobacteriaceae</taxon>
        <taxon>Mycobacterium</taxon>
        <taxon>Mycobacterium tuberculosis complex</taxon>
    </lineage>
</organism>
<comment type="subcellular location">
    <subcellularLocation>
        <location evidence="4">Cell membrane</location>
        <topology evidence="1">Multi-pass membrane protein</topology>
    </subcellularLocation>
</comment>
<comment type="induction">
    <text evidence="2">Repressed by RicR. Induced by copper.</text>
</comment>
<comment type="disruption phenotype">
    <text evidence="3">Mutant is slightly more resistant to copper. Mutation does not attenuate growth in mice.</text>
</comment>
<comment type="similarity">
    <text evidence="4">Belongs to the UPF0718 family.</text>
</comment>
<dbReference type="EMBL" id="AL123456">
    <property type="protein sequence ID" value="CCP45767.1"/>
    <property type="molecule type" value="Genomic_DNA"/>
</dbReference>
<dbReference type="EMBL" id="CP003248">
    <property type="protein sequence ID" value="AFN50945.1"/>
    <property type="molecule type" value="Genomic_DNA"/>
</dbReference>
<dbReference type="EMBL" id="JLDD01000035">
    <property type="protein sequence ID" value="KBJ29879.1"/>
    <property type="molecule type" value="Genomic_DNA"/>
</dbReference>
<dbReference type="RefSeq" id="NP_217479.1">
    <property type="nucleotide sequence ID" value="NC_000962.3"/>
</dbReference>
<dbReference type="RefSeq" id="WP_003414924.1">
    <property type="nucleotide sequence ID" value="NZ_NVQJ01000015.1"/>
</dbReference>
<dbReference type="STRING" id="83332.Rv2963"/>
<dbReference type="PaxDb" id="83332-Rv2963"/>
<dbReference type="DNASU" id="887263"/>
<dbReference type="GeneID" id="887263"/>
<dbReference type="KEGG" id="mtu:Rv2963"/>
<dbReference type="KEGG" id="mtv:RVBD_2963"/>
<dbReference type="PATRIC" id="fig|83332.111.peg.3301"/>
<dbReference type="TubercuList" id="Rv2963"/>
<dbReference type="eggNOG" id="COG0701">
    <property type="taxonomic scope" value="Bacteria"/>
</dbReference>
<dbReference type="InParanoid" id="I6YET7"/>
<dbReference type="OrthoDB" id="9811980at2"/>
<dbReference type="Proteomes" id="UP000001584">
    <property type="component" value="Chromosome"/>
</dbReference>
<dbReference type="GO" id="GO:0005886">
    <property type="term" value="C:plasma membrane"/>
    <property type="evidence" value="ECO:0007669"/>
    <property type="project" value="UniProtKB-SubCell"/>
</dbReference>
<dbReference type="InterPro" id="IPR005524">
    <property type="entry name" value="DUF318"/>
</dbReference>
<dbReference type="InterPro" id="IPR053166">
    <property type="entry name" value="UPF0718_permease"/>
</dbReference>
<dbReference type="PANTHER" id="PTHR42775">
    <property type="entry name" value="PERMEASE RV2963-RELATED"/>
    <property type="match status" value="1"/>
</dbReference>
<dbReference type="PANTHER" id="PTHR42775:SF1">
    <property type="entry name" value="PERMEASE RV2963-RELATED"/>
    <property type="match status" value="1"/>
</dbReference>
<dbReference type="Pfam" id="PF03773">
    <property type="entry name" value="ArsP_1"/>
    <property type="match status" value="1"/>
</dbReference>
<accession>I6YET7</accession>